<protein>
    <recommendedName>
        <fullName evidence="34">Endoplasmic reticulum membrane sensor NFE2L1</fullName>
    </recommendedName>
    <alternativeName>
        <fullName evidence="32">Locus control region-factor 1</fullName>
        <shortName evidence="32">LCR-F1</shortName>
    </alternativeName>
    <alternativeName>
        <fullName evidence="34">Nuclear factor erythroid 2-related factor 1</fullName>
        <shortName evidence="33">NF-E2-related factor 1</shortName>
        <shortName evidence="33">NFE2-related factor 1</shortName>
    </alternativeName>
    <alternativeName>
        <fullName>Nuclear factor, erythroid derived 2, like 1</fullName>
    </alternativeName>
    <component>
        <recommendedName>
            <fullName evidence="34">Transcription factor NRF1</fullName>
        </recommendedName>
    </component>
</protein>
<evidence type="ECO:0000250" key="1">
    <source>
        <dbReference type="UniProtKB" id="Q14494"/>
    </source>
</evidence>
<evidence type="ECO:0000255" key="2"/>
<evidence type="ECO:0000255" key="3">
    <source>
        <dbReference type="PROSITE-ProRule" id="PRU00978"/>
    </source>
</evidence>
<evidence type="ECO:0000256" key="4">
    <source>
        <dbReference type="SAM" id="MobiDB-lite"/>
    </source>
</evidence>
<evidence type="ECO:0000269" key="5">
    <source>
    </source>
</evidence>
<evidence type="ECO:0000269" key="6">
    <source>
    </source>
</evidence>
<evidence type="ECO:0000269" key="7">
    <source>
    </source>
</evidence>
<evidence type="ECO:0000269" key="8">
    <source>
    </source>
</evidence>
<evidence type="ECO:0000269" key="9">
    <source>
    </source>
</evidence>
<evidence type="ECO:0000269" key="10">
    <source>
    </source>
</evidence>
<evidence type="ECO:0000269" key="11">
    <source>
    </source>
</evidence>
<evidence type="ECO:0000269" key="12">
    <source>
    </source>
</evidence>
<evidence type="ECO:0000269" key="13">
    <source>
    </source>
</evidence>
<evidence type="ECO:0000269" key="14">
    <source>
    </source>
</evidence>
<evidence type="ECO:0000269" key="15">
    <source>
    </source>
</evidence>
<evidence type="ECO:0000269" key="16">
    <source>
    </source>
</evidence>
<evidence type="ECO:0000269" key="17">
    <source>
    </source>
</evidence>
<evidence type="ECO:0000269" key="18">
    <source>
    </source>
</evidence>
<evidence type="ECO:0000269" key="19">
    <source>
    </source>
</evidence>
<evidence type="ECO:0000269" key="20">
    <source>
    </source>
</evidence>
<evidence type="ECO:0000269" key="21">
    <source>
    </source>
</evidence>
<evidence type="ECO:0000269" key="22">
    <source>
    </source>
</evidence>
<evidence type="ECO:0000269" key="23">
    <source>
    </source>
</evidence>
<evidence type="ECO:0000269" key="24">
    <source>
    </source>
</evidence>
<evidence type="ECO:0000269" key="25">
    <source>
    </source>
</evidence>
<evidence type="ECO:0000269" key="26">
    <source>
    </source>
</evidence>
<evidence type="ECO:0000269" key="27">
    <source>
    </source>
</evidence>
<evidence type="ECO:0000269" key="28">
    <source>
    </source>
</evidence>
<evidence type="ECO:0000269" key="29">
    <source>
    </source>
</evidence>
<evidence type="ECO:0000303" key="30">
    <source>
    </source>
</evidence>
<evidence type="ECO:0000303" key="31">
    <source>
    </source>
</evidence>
<evidence type="ECO:0000303" key="32">
    <source>
    </source>
</evidence>
<evidence type="ECO:0000303" key="33">
    <source>
    </source>
</evidence>
<evidence type="ECO:0000305" key="34"/>
<evidence type="ECO:0000305" key="35">
    <source>
    </source>
</evidence>
<evidence type="ECO:0000312" key="36">
    <source>
        <dbReference type="MGI" id="MGI:99421"/>
    </source>
</evidence>
<feature type="chain" id="PRO_0000076448" description="Endoplasmic reticulum membrane sensor NFE2L1">
    <location>
        <begin position="1"/>
        <end position="741"/>
    </location>
</feature>
<feature type="chain" id="PRO_0000443104" description="Transcription factor NRF1" evidence="1">
    <location>
        <begin position="104"/>
        <end position="741"/>
    </location>
</feature>
<feature type="transmembrane region" description="Helical; Signal-anchor for type II membrane protein" evidence="2">
    <location>
        <begin position="7"/>
        <end position="24"/>
    </location>
</feature>
<feature type="domain" description="bZIP" evidence="3">
    <location>
        <begin position="623"/>
        <end position="686"/>
    </location>
</feature>
<feature type="region of interest" description="Disordered" evidence="4">
    <location>
        <begin position="108"/>
        <end position="148"/>
    </location>
</feature>
<feature type="region of interest" description="Cholesterol recognition/amino acid consensus (CRAC) region" evidence="26">
    <location>
        <begin position="191"/>
        <end position="199"/>
    </location>
</feature>
<feature type="region of interest" description="Disordered" evidence="4">
    <location>
        <begin position="198"/>
        <end position="220"/>
    </location>
</feature>
<feature type="region of interest" description="CPD" evidence="20">
    <location>
        <begin position="350"/>
        <end position="354"/>
    </location>
</feature>
<feature type="region of interest" description="Disordered" evidence="4">
    <location>
        <begin position="441"/>
        <end position="501"/>
    </location>
</feature>
<feature type="region of interest" description="Disordered" evidence="4">
    <location>
        <begin position="551"/>
        <end position="582"/>
    </location>
</feature>
<feature type="region of interest" description="Basic motif" evidence="3">
    <location>
        <begin position="625"/>
        <end position="644"/>
    </location>
</feature>
<feature type="region of interest" description="Leucine-zipper" evidence="3">
    <location>
        <begin position="651"/>
        <end position="665"/>
    </location>
</feature>
<feature type="region of interest" description="Disordered" evidence="4">
    <location>
        <begin position="722"/>
        <end position="741"/>
    </location>
</feature>
<feature type="short sequence motif" description="Destruction motif" evidence="19">
    <location>
        <begin position="447"/>
        <end position="451"/>
    </location>
</feature>
<feature type="short sequence motif" description="Nuclear localization signal" evidence="2">
    <location>
        <begin position="730"/>
        <end position="737"/>
    </location>
</feature>
<feature type="compositionally biased region" description="Polar residues" evidence="4">
    <location>
        <begin position="113"/>
        <end position="131"/>
    </location>
</feature>
<feature type="compositionally biased region" description="Basic and acidic residues" evidence="4">
    <location>
        <begin position="198"/>
        <end position="216"/>
    </location>
</feature>
<feature type="compositionally biased region" description="Low complexity" evidence="4">
    <location>
        <begin position="447"/>
        <end position="492"/>
    </location>
</feature>
<feature type="compositionally biased region" description="Basic and acidic residues" evidence="4">
    <location>
        <begin position="567"/>
        <end position="582"/>
    </location>
</feature>
<feature type="compositionally biased region" description="Basic residues" evidence="4">
    <location>
        <begin position="732"/>
        <end position="741"/>
    </location>
</feature>
<feature type="site" description="Cleavage; by DDI2" evidence="1">
    <location>
        <begin position="103"/>
        <end position="104"/>
    </location>
</feature>
<feature type="modified residue" description="Phosphoserine; by CK2" evidence="23">
    <location>
        <position position="497"/>
    </location>
</feature>
<feature type="modified residue" description="Phosphoserine" evidence="1">
    <location>
        <position position="568"/>
    </location>
</feature>
<feature type="glycosylation site" description="N-linked (GlcNAc...) asparagine" evidence="2">
    <location>
        <position position="319"/>
    </location>
</feature>
<feature type="glycosylation site" description="N-linked (GlcNAc...) asparagine" evidence="2">
    <location>
        <position position="331"/>
    </location>
</feature>
<feature type="glycosylation site" description="N-linked (GlcNAc...) asparagine" evidence="2">
    <location>
        <position position="394"/>
    </location>
</feature>
<feature type="splice variant" id="VSP_000580" description="In isoform 2 and isoform 3." evidence="34">
    <location>
        <begin position="1"/>
        <end position="158"/>
    </location>
</feature>
<feature type="splice variant" id="VSP_046523" description="In isoform 3." evidence="34">
    <location>
        <begin position="159"/>
        <end position="291"/>
    </location>
</feature>
<feature type="splice variant" id="VSP_046524" description="In isoform 2." evidence="34">
    <original>VAPPVSGDLTKE</original>
    <variation>MGWESRLTAASA</variation>
    <location>
        <begin position="159"/>
        <end position="170"/>
    </location>
</feature>
<feature type="splice variant" id="VSP_000581" description="In isoform 3." evidence="34">
    <location>
        <begin position="447"/>
        <end position="583"/>
    </location>
</feature>
<feature type="mutagenesis site" description="Abolishes interaction with FBXW7." evidence="20">
    <location>
        <begin position="350"/>
        <end position="354"/>
    </location>
</feature>
<feature type="mutagenesis site" description="Abolishes ubiquitination and degradation by the SCF(BTRC) complex." evidence="19">
    <original>SGLS</original>
    <variation>AGLA</variation>
    <location>
        <begin position="448"/>
        <end position="451"/>
    </location>
</feature>
<feature type="mutagenesis site" description="Does not affect phosphorylation by CK2." evidence="23">
    <original>S</original>
    <variation>A</variation>
    <location>
        <position position="496"/>
    </location>
</feature>
<feature type="mutagenesis site" description="Abolishes phosphorylation by CK2." evidence="23">
    <original>S</original>
    <variation>A</variation>
    <location>
        <position position="497"/>
    </location>
</feature>
<feature type="mutagenesis site" description="Does not affect phosphorylation by CK2." evidence="23">
    <original>S</original>
    <variation>A</variation>
    <location>
        <position position="499"/>
    </location>
</feature>
<feature type="mutagenesis site" description="Does not affect phosphorylation by CK2." evidence="23">
    <original>T</original>
    <variation>A</variation>
    <location>
        <position position="501"/>
    </location>
</feature>
<feature type="sequence conflict" description="In Ref. 1; CAA55362." evidence="34" ref="1">
    <original>T</original>
    <variation>S</variation>
    <location>
        <position position="318"/>
    </location>
</feature>
<feature type="sequence conflict" description="In Ref. 1; CAA55362." evidence="34" ref="1">
    <original>L</original>
    <variation>P</variation>
    <location>
        <position position="387"/>
    </location>
</feature>
<accession>Q61985</accession>
<accession>E9Q038</accession>
<accession>O70234</accession>
<reference key="1">
    <citation type="journal article" date="1995" name="Genomics">
        <title>Cloning and mapping of murine Nfe2l1.</title>
        <authorList>
            <person name="McKie J."/>
            <person name="Johnstone K."/>
            <person name="Mattei M.-G."/>
            <person name="Scambler P."/>
        </authorList>
    </citation>
    <scope>NUCLEOTIDE SEQUENCE [MRNA] (ISOFORM 1)</scope>
    <source>
        <tissue>Embryo</tissue>
    </source>
</reference>
<reference key="2">
    <citation type="journal article" date="1998" name="Nucleic Acids Res.">
        <title>A novel splice variant of the transcription factor Nrf1 interacts with the TNFalpha promoter and stimulates transcription.</title>
        <authorList>
            <person name="Prieschl E.E."/>
            <person name="Novotny V."/>
            <person name="Csonga R."/>
            <person name="Jaksche D."/>
            <person name="Elbe-Buerger A."/>
            <person name="Thumb W."/>
            <person name="Auer M."/>
            <person name="Stingl G."/>
            <person name="Baumruker T."/>
        </authorList>
    </citation>
    <scope>NUCLEOTIDE SEQUENCE [GENOMIC DNA] (ISOFORM 3)</scope>
    <scope>FUNCTION</scope>
    <scope>PHOSPHORYLATION BY CKII</scope>
</reference>
<reference key="3">
    <citation type="journal article" date="2009" name="PLoS Biol.">
        <title>Lineage-specific biology revealed by a finished genome assembly of the mouse.</title>
        <authorList>
            <person name="Church D.M."/>
            <person name="Goodstadt L."/>
            <person name="Hillier L.W."/>
            <person name="Zody M.C."/>
            <person name="Goldstein S."/>
            <person name="She X."/>
            <person name="Bult C.J."/>
            <person name="Agarwala R."/>
            <person name="Cherry J.L."/>
            <person name="DiCuccio M."/>
            <person name="Hlavina W."/>
            <person name="Kapustin Y."/>
            <person name="Meric P."/>
            <person name="Maglott D."/>
            <person name="Birtle Z."/>
            <person name="Marques A.C."/>
            <person name="Graves T."/>
            <person name="Zhou S."/>
            <person name="Teague B."/>
            <person name="Potamousis K."/>
            <person name="Churas C."/>
            <person name="Place M."/>
            <person name="Herschleb J."/>
            <person name="Runnheim R."/>
            <person name="Forrest D."/>
            <person name="Amos-Landgraf J."/>
            <person name="Schwartz D.C."/>
            <person name="Cheng Z."/>
            <person name="Lindblad-Toh K."/>
            <person name="Eichler E.E."/>
            <person name="Ponting C.P."/>
        </authorList>
    </citation>
    <scope>NUCLEOTIDE SEQUENCE [LARGE SCALE GENOMIC DNA]</scope>
    <source>
        <strain>C57BL/6J</strain>
    </source>
</reference>
<reference key="4">
    <citation type="journal article" date="1997" name="Genes Dev.">
        <title>The bZIP transcription factor LCR-F1 is essential for mesoderm formation in mouse development.</title>
        <authorList>
            <person name="Farmer S.C."/>
            <person name="Sun C.W."/>
            <person name="Winnier G.E."/>
            <person name="Hogan B.L."/>
            <person name="Townes T.M."/>
        </authorList>
    </citation>
    <scope>DISRUPTION PHENOTYPE</scope>
</reference>
<reference key="5">
    <citation type="journal article" date="1998" name="EMBO J.">
        <title>Targeted disruption of the ubiquitous CNC-bZIP transcription factor, Nrf-1, results in anemia and embryonic lethality in mice.</title>
        <authorList>
            <person name="Chan J.Y."/>
            <person name="Kwong M."/>
            <person name="Lu R."/>
            <person name="Chang J."/>
            <person name="Wang B."/>
            <person name="Yen T.S."/>
            <person name="Kan Y.W."/>
        </authorList>
    </citation>
    <scope>FUNCTION</scope>
    <scope>DISRUPTION PHENOTYPE</scope>
</reference>
<reference key="6">
    <citation type="journal article" date="1999" name="J. Biol. Chem.">
        <title>The CNC basic leucine zipper factor, Nrf1, is essential for cell survival in response to oxidative stress-inducing agents. Role for Nrf1 in gamma-gcs(l) and gss expression in mouse fibroblasts.</title>
        <authorList>
            <person name="Kwong M."/>
            <person name="Kan Y.W."/>
            <person name="Chan J.Y."/>
        </authorList>
    </citation>
    <scope>FUNCTION</scope>
    <scope>DNA-BINDING</scope>
</reference>
<reference key="7">
    <citation type="journal article" date="2001" name="Biochim. Biophys. Acta">
        <title>TCF11/Nrf1 overexpression increases the intracellular glutathione level and can transactivate the gamma-glutamylcysteine synthetase (GCS) heavy subunit promoter.</title>
        <authorList>
            <person name="Myhrstad M.C."/>
            <person name="Husberg C."/>
            <person name="Murphy P."/>
            <person name="Nordstroem O."/>
            <person name="Blomhoff R."/>
            <person name="Moskaug J.O."/>
            <person name="Kolstoe A.B."/>
        </authorList>
    </citation>
    <scope>FUNCTION</scope>
    <scope>DNA-BINDING</scope>
    <scope>INTERACTION WITH MAFG</scope>
</reference>
<reference key="8">
    <citation type="journal article" date="2003" name="J. Biol. Chem.">
        <title>Deficiency of the Nrf1 and Nrf2 transcription factors results in early embryonic lethality and severe oxidative stress.</title>
        <authorList>
            <person name="Leung L."/>
            <person name="Kwong M."/>
            <person name="Hou S."/>
            <person name="Lee C."/>
            <person name="Chan J.Y."/>
        </authorList>
    </citation>
    <scope>FUNCTION</scope>
    <scope>DISRUPTION PHENOTYPE</scope>
</reference>
<reference key="9">
    <citation type="journal article" date="2003" name="Mol. Cell. Biol.">
        <title>Nrf1 is critical for redox balance and survival of liver cells during development.</title>
        <authorList>
            <person name="Chen L."/>
            <person name="Kwong M."/>
            <person name="Lu R."/>
            <person name="Ginzinger D."/>
            <person name="Lee C."/>
            <person name="Leung L."/>
            <person name="Chan J.Y."/>
        </authorList>
    </citation>
    <scope>FUNCTION</scope>
</reference>
<reference key="10">
    <citation type="journal article" date="2005" name="Proc. Natl. Acad. Sci. U.S.A.">
        <title>Liver-specific inactivation of the Nrf1 gene in adult mouse leads to nonalcoholic steatohepatitis and hepatic neoplasia.</title>
        <authorList>
            <person name="Xu Z."/>
            <person name="Chen L."/>
            <person name="Leung L."/>
            <person name="Yen T.S."/>
            <person name="Lee C."/>
            <person name="Chan J.Y."/>
        </authorList>
    </citation>
    <scope>FUNCTION</scope>
    <scope>DISRUPTION PHENOTYPE</scope>
</reference>
<reference key="11">
    <citation type="journal article" date="2006" name="Biochem. J.">
        <title>Negative regulation of the Nrf1 transcription factor by its N-terminal domain is independent of Keap1: Nrf1, but not Nrf2, is targeted to the endoplasmic reticulum.</title>
        <authorList>
            <person name="Zhang Y."/>
            <person name="Crouch D.H."/>
            <person name="Yamamoto M."/>
            <person name="Hayes J.D."/>
        </authorList>
    </citation>
    <scope>FUNCTION</scope>
    <scope>SUBCELLULAR LOCATION</scope>
</reference>
<reference key="12">
    <citation type="journal article" date="2007" name="Biochem. J.">
        <title>The NHB1 (N-terminal homology box 1) sequence in transcription factor Nrf1 is required to anchor it to the endoplasmic reticulum and also to enable its asparagine-glycosylation.</title>
        <authorList>
            <person name="Zhang Y."/>
            <person name="Lucocq J.M."/>
            <person name="Yamamoto M."/>
            <person name="Hayes J.D."/>
        </authorList>
    </citation>
    <scope>SUBCELLULAR LOCATION</scope>
    <scope>GLYCOSYLATION</scope>
</reference>
<reference key="13">
    <citation type="journal article" date="2007" name="J. Biol. Chem.">
        <title>Nuclear factor-E2-related factor-1 mediates ascorbic acid induction of osterix expression via interaction with antioxidant-responsive element in bone cells.</title>
        <authorList>
            <person name="Xing W."/>
            <person name="Singgih A."/>
            <person name="Kapoor A."/>
            <person name="Alarcon C.M."/>
            <person name="Baylink D.J."/>
            <person name="Mohan S."/>
        </authorList>
    </citation>
    <scope>FUNCTION</scope>
</reference>
<reference key="14">
    <citation type="journal article" date="2008" name="J. Biol. Chem.">
        <title>Nrf1 and Nrf2 play distinct roles in activation of antioxidant response element-dependent genes.</title>
        <authorList>
            <person name="Ohtsuji M."/>
            <person name="Katsuoka F."/>
            <person name="Kobayashi A."/>
            <person name="Aburatani H."/>
            <person name="Hayes J.D."/>
            <person name="Yamamoto M."/>
        </authorList>
    </citation>
    <scope>FUNCTION</scope>
    <scope>DISRUPTION PHENOTYPE</scope>
</reference>
<reference key="15">
    <citation type="journal article" date="2009" name="Biochem. J.">
        <title>The Nrf1 CNC/bZIP protein is a nuclear envelope-bound transcription factor that is activated by t-butyl hydroquinone but not by endoplasmic reticulum stressors.</title>
        <authorList>
            <person name="Zhang Y."/>
            <person name="Lucocq J.M."/>
            <person name="Hayes J.D."/>
        </authorList>
    </citation>
    <scope>SUBCELLULAR LOCATION</scope>
    <scope>GLYCOSYLATION</scope>
    <scope>SUBUNIT</scope>
</reference>
<reference key="16">
    <citation type="journal article" date="2010" name="Biochem. J.">
        <title>Identification of topological determinants in the N-terminal domain of transcription factor Nrf1 that control its orientation in the endoplasmic reticulum membrane.</title>
        <authorList>
            <person name="Zhang Y."/>
            <person name="Hayes J.D."/>
        </authorList>
    </citation>
    <scope>SUBCELLULAR LOCATION</scope>
    <scope>TOPOLOGY</scope>
</reference>
<reference key="17">
    <citation type="journal article" date="2010" name="Mol. Cell">
        <title>Transcription factor Nrf1 mediates the proteasome recovery pathway after proteasome inhibition in mammalian cells.</title>
        <authorList>
            <person name="Radhakrishnan S.K."/>
            <person name="Lee C.S."/>
            <person name="Young P."/>
            <person name="Beskow A."/>
            <person name="Chan J.Y."/>
            <person name="Deshaies R.J."/>
        </authorList>
    </citation>
    <scope>FUNCTION</scope>
</reference>
<reference key="18">
    <citation type="journal article" date="2011" name="Genes Cells">
        <title>Central nervous system-specific deletion of transcription factor Nrf1 causes progressive motor neuronal dysfunction.</title>
        <authorList>
            <person name="Kobayashi A."/>
            <person name="Tsukide T."/>
            <person name="Miyasaka T."/>
            <person name="Morita T."/>
            <person name="Mizoroki T."/>
            <person name="Saito Y."/>
            <person name="Ihara Y."/>
            <person name="Takashima A."/>
            <person name="Noguchi N."/>
            <person name="Fukamizu A."/>
            <person name="Hirotsu Y."/>
            <person name="Ohtsuji M."/>
            <person name="Katsuoka F."/>
            <person name="Yamamoto M."/>
        </authorList>
    </citation>
    <scope>DISRUPTION PHENOTYPE</scope>
</reference>
<reference key="19">
    <citation type="journal article" date="2011" name="J. Biol. Chem.">
        <title>The Fbw7 tumor suppressor regulates nuclear factor E2-related factor 1 transcription factor turnover through proteasome-mediated proteolysis.</title>
        <authorList>
            <person name="Biswas M."/>
            <person name="Phan D."/>
            <person name="Watanabe M."/>
            <person name="Chan J.Y."/>
        </authorList>
    </citation>
    <scope>UBIQUITINATION</scope>
    <scope>INTERACTION WITH FBXW7</scope>
    <scope>MUTAGENESIS OF 350-SER--GLU-354</scope>
</reference>
<reference key="20">
    <citation type="journal article" date="2011" name="Mol. Cell. Biol.">
        <title>Dual regulation of the transcriptional activity of Nrf1 by beta-TrCP- and Hrd1-dependent degradation mechanisms.</title>
        <authorList>
            <person name="Tsuchiya Y."/>
            <person name="Morita T."/>
            <person name="Kim M."/>
            <person name="Iemura S."/>
            <person name="Natsume T."/>
            <person name="Yamamoto M."/>
            <person name="Kobayashi A."/>
        </authorList>
    </citation>
    <scope>FUNCTION</scope>
    <scope>SUBCELLULAR LOCATION</scope>
    <scope>UBIQUITINATION</scope>
    <scope>INTERACTION WITH BTRC AND SYVN1</scope>
    <scope>MUTAGENESIS OF 448-SER--SER-451</scope>
</reference>
<reference key="21">
    <citation type="journal article" date="2011" name="Proc. Natl. Acad. Sci. U.S.A.">
        <title>Loss of nuclear factor E2-related factor 1 in the brain leads to dysregulation of proteasome gene expression and neurodegeneration.</title>
        <authorList>
            <person name="Lee C.S."/>
            <person name="Lee C."/>
            <person name="Hu T."/>
            <person name="Nguyen J.M."/>
            <person name="Zhang J."/>
            <person name="Martin M.V."/>
            <person name="Vawter M.P."/>
            <person name="Huang E.J."/>
            <person name="Chan J.Y."/>
        </authorList>
    </citation>
    <scope>FUNCTION</scope>
    <scope>DISRUPTION PHENOTYPE</scope>
</reference>
<reference key="22">
    <citation type="journal article" date="2012" name="Mol. Cell. Biol.">
        <title>NF-E2-related factor 1 (Nrf1) serves as a novel regulator of hepatic lipid metabolism through regulation of the Lipin1 and PGC-1beta genes.</title>
        <authorList>
            <person name="Hirotsu Y."/>
            <person name="Hataya N."/>
            <person name="Katsuoka F."/>
            <person name="Yamamoto M."/>
        </authorList>
    </citation>
    <scope>FUNCTION</scope>
</reference>
<reference key="23">
    <citation type="journal article" date="2012" name="PLoS ONE">
        <title>Characterization of Nrf1b, a novel isoform of the nuclear factor-erythroid-2 related transcription factor-1 that activates antioxidant response element-regulated genes.</title>
        <authorList>
            <person name="Kwong E.K."/>
            <person name="Kim K.M."/>
            <person name="Penalosa P.J."/>
            <person name="Chan J.Y."/>
        </authorList>
    </citation>
    <scope>ALTERNATIVE PROMOTER USAGE</scope>
    <scope>IDENTIFICATION OF ISOFORM 2</scope>
    <scope>FUNCTION</scope>
    <scope>INTERACTION WITH MAFG</scope>
    <scope>SUBCELLULAR LOCATION</scope>
    <scope>TISSUE SPECIFICITY</scope>
</reference>
<reference key="24">
    <citation type="journal article" date="2013" name="Mol. Cell. Biol.">
        <title>The casein kinase 2-nrf1 axis controls the clearance of ubiquitinated proteins by regulating proteasome gene expression.</title>
        <authorList>
            <person name="Tsuchiya Y."/>
            <person name="Taniguchi H."/>
            <person name="Ito Y."/>
            <person name="Morita T."/>
            <person name="Karim M.R."/>
            <person name="Ohtake N."/>
            <person name="Fukagai K."/>
            <person name="Ito T."/>
            <person name="Okamuro S."/>
            <person name="Iemura S."/>
            <person name="Natsume T."/>
            <person name="Nishida E."/>
            <person name="Kobayashi A."/>
        </authorList>
    </citation>
    <scope>FUNCTION</scope>
    <scope>PHOSPHORYLATION AT SER-497</scope>
    <scope>MUTAGENESIS OF SER-496; SER-497; SER-499 AND THR-501</scope>
</reference>
<reference key="25">
    <citation type="journal article" date="2014" name="Genes Cells">
        <title>Transcription factor NF-E2-related factor 1 impairs glucose metabolism in mice.</title>
        <authorList>
            <person name="Hirotsu Y."/>
            <person name="Higashi C."/>
            <person name="Fukutomi T."/>
            <person name="Katsuoka F."/>
            <person name="Tsujita T."/>
            <person name="Yagishita Y."/>
            <person name="Matsuyama Y."/>
            <person name="Motohashi H."/>
            <person name="Uruno A."/>
            <person name="Yamamoto M."/>
        </authorList>
    </citation>
    <scope>FUNCTION</scope>
</reference>
<reference key="26">
    <citation type="journal article" date="2015" name="Sci. Rep.">
        <title>The selective post-translational processing of transcription factor Nrf1 yields distinct isoforms that dictate its ability to differentially regulate gene expression.</title>
        <authorList>
            <person name="Zhang Y."/>
            <person name="Li S."/>
            <person name="Xiang Y."/>
            <person name="Qiu L."/>
            <person name="Zhao H."/>
            <person name="Hayes J.D."/>
        </authorList>
    </citation>
    <scope>SUBCELLULAR LOCATION</scope>
</reference>
<reference key="27">
    <citation type="journal article" date="2016" name="Gene">
        <title>Nuclear factor erythroid-2 like 1 (NFE2L1): structure, function and regulation.</title>
        <authorList>
            <person name="Kim H.M."/>
            <person name="Han J.W."/>
            <person name="Chan J.Y."/>
        </authorList>
    </citation>
    <scope>REVIEW</scope>
</reference>
<reference key="28">
    <citation type="journal article" date="2017" name="Cell">
        <title>NRF1 is an ER membrane sensor that is central to cholesterol homeostasis.</title>
        <authorList>
            <person name="Widenmaier S.B."/>
            <person name="Snyder N.A."/>
            <person name="Nguyen T.B."/>
            <person name="Arduini A."/>
            <person name="Lee G.Y."/>
            <person name="Arruda A.P."/>
            <person name="Saksi J."/>
            <person name="Bartelt A."/>
            <person name="Hotamisligil G.S."/>
        </authorList>
    </citation>
    <scope>FUNCTION</scope>
    <scope>SUBCELLULAR LOCATION</scope>
    <scope>PROTEOLYTIC PROCESSING</scope>
    <scope>DOMAIN</scope>
    <scope>CHOLESTEROL-BINDING</scope>
    <scope>DISRUPTION PHENOTYPE</scope>
</reference>
<keyword id="KW-0010">Activator</keyword>
<keyword id="KW-0877">Alternative promoter usage</keyword>
<keyword id="KW-0025">Alternative splicing</keyword>
<keyword id="KW-0153">Cholesterol metabolism</keyword>
<keyword id="KW-0963">Cytoplasm</keyword>
<keyword id="KW-0238">DNA-binding</keyword>
<keyword id="KW-0256">Endoplasmic reticulum</keyword>
<keyword id="KW-0325">Glycoprotein</keyword>
<keyword id="KW-0443">Lipid metabolism</keyword>
<keyword id="KW-0446">Lipid-binding</keyword>
<keyword id="KW-0472">Membrane</keyword>
<keyword id="KW-0539">Nucleus</keyword>
<keyword id="KW-0597">Phosphoprotein</keyword>
<keyword id="KW-1185">Reference proteome</keyword>
<keyword id="KW-0678">Repressor</keyword>
<keyword id="KW-0735">Signal-anchor</keyword>
<keyword id="KW-0753">Steroid metabolism</keyword>
<keyword id="KW-1207">Sterol metabolism</keyword>
<keyword id="KW-0804">Transcription</keyword>
<keyword id="KW-0805">Transcription regulation</keyword>
<keyword id="KW-0812">Transmembrane</keyword>
<keyword id="KW-1133">Transmembrane helix</keyword>
<keyword id="KW-0832">Ubl conjugation</keyword>
<gene>
    <name evidence="31 36" type="primary">Nfe2l1</name>
    <name evidence="33" type="synonym">Nrf1</name>
</gene>
<dbReference type="EMBL" id="X78709">
    <property type="protein sequence ID" value="CAA55362.1"/>
    <property type="molecule type" value="mRNA"/>
</dbReference>
<dbReference type="EMBL" id="AF015881">
    <property type="protein sequence ID" value="AAC40108.1"/>
    <property type="molecule type" value="Genomic_DNA"/>
</dbReference>
<dbReference type="EMBL" id="AL596384">
    <property type="status" value="NOT_ANNOTATED_CDS"/>
    <property type="molecule type" value="Genomic_DNA"/>
</dbReference>
<dbReference type="CCDS" id="CCDS25304.1">
    <molecule id="Q61985-1"/>
</dbReference>
<dbReference type="CCDS" id="CCDS48894.1">
    <molecule id="Q61985-3"/>
</dbReference>
<dbReference type="PIR" id="I48694">
    <property type="entry name" value="I48694"/>
</dbReference>
<dbReference type="RefSeq" id="NP_001123922.1">
    <molecule id="Q61985-1"/>
    <property type="nucleotide sequence ID" value="NM_001130450.1"/>
</dbReference>
<dbReference type="RefSeq" id="NP_001123925.1">
    <molecule id="Q61985-3"/>
    <property type="nucleotide sequence ID" value="NM_001130453.1"/>
</dbReference>
<dbReference type="RefSeq" id="NP_032712.2">
    <molecule id="Q61985-1"/>
    <property type="nucleotide sequence ID" value="NM_008686.3"/>
</dbReference>
<dbReference type="SMR" id="Q61985"/>
<dbReference type="FunCoup" id="Q61985">
    <property type="interactions" value="2315"/>
</dbReference>
<dbReference type="IntAct" id="Q61985">
    <property type="interactions" value="2"/>
</dbReference>
<dbReference type="MINT" id="Q61985"/>
<dbReference type="STRING" id="10090.ENSMUSP00000080467"/>
<dbReference type="GlyCosmos" id="Q61985">
    <property type="glycosylation" value="3 sites, No reported glycans"/>
</dbReference>
<dbReference type="GlyGen" id="Q61985">
    <property type="glycosylation" value="5 sites, 1 O-linked glycan (2 sites)"/>
</dbReference>
<dbReference type="iPTMnet" id="Q61985"/>
<dbReference type="PhosphoSitePlus" id="Q61985"/>
<dbReference type="PaxDb" id="10090-ENSMUSP00000103286"/>
<dbReference type="ProteomicsDB" id="287393">
    <molecule id="Q61985-1"/>
</dbReference>
<dbReference type="ProteomicsDB" id="287394">
    <molecule id="Q61985-3"/>
</dbReference>
<dbReference type="ProteomicsDB" id="287395">
    <molecule id="Q61985-2"/>
</dbReference>
<dbReference type="Antibodypedia" id="30234">
    <property type="antibodies" value="243 antibodies from 32 providers"/>
</dbReference>
<dbReference type="DNASU" id="18023"/>
<dbReference type="Ensembl" id="ENSMUST00000081775.12">
    <molecule id="Q61985-1"/>
    <property type="protein sequence ID" value="ENSMUSP00000080467.6"/>
    <property type="gene ID" value="ENSMUSG00000038615.18"/>
</dbReference>
<dbReference type="Ensembl" id="ENSMUST00000107657.8">
    <molecule id="Q61985-1"/>
    <property type="protein sequence ID" value="ENSMUSP00000103284.2"/>
    <property type="gene ID" value="ENSMUSG00000038615.18"/>
</dbReference>
<dbReference type="Ensembl" id="ENSMUST00000107658.8">
    <molecule id="Q61985-1"/>
    <property type="protein sequence ID" value="ENSMUSP00000103285.2"/>
    <property type="gene ID" value="ENSMUSG00000038615.18"/>
</dbReference>
<dbReference type="Ensembl" id="ENSMUST00000167110.8">
    <molecule id="Q61985-3"/>
    <property type="protein sequence ID" value="ENSMUSP00000127804.2"/>
    <property type="gene ID" value="ENSMUSG00000038615.18"/>
</dbReference>
<dbReference type="Ensembl" id="ENSMUST00000167149.8">
    <molecule id="Q61985-1"/>
    <property type="protein sequence ID" value="ENSMUSP00000128527.2"/>
    <property type="gene ID" value="ENSMUSG00000038615.18"/>
</dbReference>
<dbReference type="GeneID" id="18023"/>
<dbReference type="KEGG" id="mmu:18023"/>
<dbReference type="UCSC" id="uc007lcq.2">
    <molecule id="Q61985-1"/>
    <property type="organism name" value="mouse"/>
</dbReference>
<dbReference type="UCSC" id="uc011ydl.1">
    <molecule id="Q61985-3"/>
    <property type="organism name" value="mouse"/>
</dbReference>
<dbReference type="AGR" id="MGI:99421"/>
<dbReference type="CTD" id="4779"/>
<dbReference type="MGI" id="MGI:99421">
    <property type="gene designation" value="Nfe2l1"/>
</dbReference>
<dbReference type="VEuPathDB" id="HostDB:ENSMUSG00000038615"/>
<dbReference type="eggNOG" id="KOG3863">
    <property type="taxonomic scope" value="Eukaryota"/>
</dbReference>
<dbReference type="GeneTree" id="ENSGT00950000182892"/>
<dbReference type="HOGENOM" id="CLU_024173_1_0_1"/>
<dbReference type="InParanoid" id="Q61985"/>
<dbReference type="OMA" id="PEGNQEH"/>
<dbReference type="OrthoDB" id="59555at9989"/>
<dbReference type="BioGRID-ORCS" id="18023">
    <property type="hits" value="4 hits in 81 CRISPR screens"/>
</dbReference>
<dbReference type="ChiTaRS" id="Nfe2l1">
    <property type="organism name" value="mouse"/>
</dbReference>
<dbReference type="PRO" id="PR:Q61985"/>
<dbReference type="Proteomes" id="UP000000589">
    <property type="component" value="Chromosome 11"/>
</dbReference>
<dbReference type="RNAct" id="Q61985">
    <property type="molecule type" value="protein"/>
</dbReference>
<dbReference type="Bgee" id="ENSMUSG00000038615">
    <property type="expression patterns" value="Expressed in hindlimb stylopod muscle and 270 other cell types or tissues"/>
</dbReference>
<dbReference type="ExpressionAtlas" id="Q61985">
    <property type="expression patterns" value="baseline and differential"/>
</dbReference>
<dbReference type="GO" id="GO:0005829">
    <property type="term" value="C:cytosol"/>
    <property type="evidence" value="ECO:0007669"/>
    <property type="project" value="Ensembl"/>
</dbReference>
<dbReference type="GO" id="GO:0005783">
    <property type="term" value="C:endoplasmic reticulum"/>
    <property type="evidence" value="ECO:0000314"/>
    <property type="project" value="MGI"/>
</dbReference>
<dbReference type="GO" id="GO:0005789">
    <property type="term" value="C:endoplasmic reticulum membrane"/>
    <property type="evidence" value="ECO:0000314"/>
    <property type="project" value="MGI"/>
</dbReference>
<dbReference type="GO" id="GO:0005654">
    <property type="term" value="C:nucleoplasm"/>
    <property type="evidence" value="ECO:0007669"/>
    <property type="project" value="Ensembl"/>
</dbReference>
<dbReference type="GO" id="GO:0005634">
    <property type="term" value="C:nucleus"/>
    <property type="evidence" value="ECO:0000314"/>
    <property type="project" value="MGI"/>
</dbReference>
<dbReference type="GO" id="GO:0032991">
    <property type="term" value="C:protein-containing complex"/>
    <property type="evidence" value="ECO:0000314"/>
    <property type="project" value="CAFA"/>
</dbReference>
<dbReference type="GO" id="GO:0015485">
    <property type="term" value="F:cholesterol binding"/>
    <property type="evidence" value="ECO:0000314"/>
    <property type="project" value="MGI"/>
</dbReference>
<dbReference type="GO" id="GO:0003682">
    <property type="term" value="F:chromatin binding"/>
    <property type="evidence" value="ECO:0000314"/>
    <property type="project" value="MGI"/>
</dbReference>
<dbReference type="GO" id="GO:0001228">
    <property type="term" value="F:DNA-binding transcription activator activity, RNA polymerase II-specific"/>
    <property type="evidence" value="ECO:0000314"/>
    <property type="project" value="NTNU_SB"/>
</dbReference>
<dbReference type="GO" id="GO:0042802">
    <property type="term" value="F:identical protein binding"/>
    <property type="evidence" value="ECO:0007669"/>
    <property type="project" value="Ensembl"/>
</dbReference>
<dbReference type="GO" id="GO:1990841">
    <property type="term" value="F:promoter-specific chromatin binding"/>
    <property type="evidence" value="ECO:0000314"/>
    <property type="project" value="MGI"/>
</dbReference>
<dbReference type="GO" id="GO:0019904">
    <property type="term" value="F:protein domain specific binding"/>
    <property type="evidence" value="ECO:0000353"/>
    <property type="project" value="CAFA"/>
</dbReference>
<dbReference type="GO" id="GO:0044877">
    <property type="term" value="F:protein-containing complex binding"/>
    <property type="evidence" value="ECO:0000314"/>
    <property type="project" value="CAFA"/>
</dbReference>
<dbReference type="GO" id="GO:0000978">
    <property type="term" value="F:RNA polymerase II cis-regulatory region sequence-specific DNA binding"/>
    <property type="evidence" value="ECO:0000314"/>
    <property type="project" value="NTNU_SB"/>
</dbReference>
<dbReference type="GO" id="GO:0003713">
    <property type="term" value="F:transcription coactivator activity"/>
    <property type="evidence" value="ECO:0000314"/>
    <property type="project" value="MGI"/>
</dbReference>
<dbReference type="GO" id="GO:0019725">
    <property type="term" value="P:cellular homeostasis"/>
    <property type="evidence" value="ECO:0000315"/>
    <property type="project" value="MGI"/>
</dbReference>
<dbReference type="GO" id="GO:0071397">
    <property type="term" value="P:cellular response to cholesterol"/>
    <property type="evidence" value="ECO:0000315"/>
    <property type="project" value="MGI"/>
</dbReference>
<dbReference type="GO" id="GO:0070417">
    <property type="term" value="P:cellular response to cold"/>
    <property type="evidence" value="ECO:0000315"/>
    <property type="project" value="MGI"/>
</dbReference>
<dbReference type="GO" id="GO:0071280">
    <property type="term" value="P:cellular response to copper ion"/>
    <property type="evidence" value="ECO:0000315"/>
    <property type="project" value="MGI"/>
</dbReference>
<dbReference type="GO" id="GO:0042632">
    <property type="term" value="P:cholesterol homeostasis"/>
    <property type="evidence" value="ECO:0000315"/>
    <property type="project" value="MGI"/>
</dbReference>
<dbReference type="GO" id="GO:0008203">
    <property type="term" value="P:cholesterol metabolic process"/>
    <property type="evidence" value="ECO:0007669"/>
    <property type="project" value="UniProtKB-KW"/>
</dbReference>
<dbReference type="GO" id="GO:0042883">
    <property type="term" value="P:cysteine transport"/>
    <property type="evidence" value="ECO:0000315"/>
    <property type="project" value="MGI"/>
</dbReference>
<dbReference type="GO" id="GO:0030218">
    <property type="term" value="P:erythrocyte differentiation"/>
    <property type="evidence" value="ECO:0000315"/>
    <property type="project" value="MGI"/>
</dbReference>
<dbReference type="GO" id="GO:0006002">
    <property type="term" value="P:fructose 6-phosphate metabolic process"/>
    <property type="evidence" value="ECO:0000315"/>
    <property type="project" value="MGI"/>
</dbReference>
<dbReference type="GO" id="GO:0021781">
    <property type="term" value="P:glial cell fate commitment"/>
    <property type="evidence" value="ECO:0000314"/>
    <property type="project" value="MGI"/>
</dbReference>
<dbReference type="GO" id="GO:0051156">
    <property type="term" value="P:glucose 6-phosphate metabolic process"/>
    <property type="evidence" value="ECO:0000315"/>
    <property type="project" value="MGI"/>
</dbReference>
<dbReference type="GO" id="GO:0006749">
    <property type="term" value="P:glutathione metabolic process"/>
    <property type="evidence" value="ECO:0000315"/>
    <property type="project" value="MGI"/>
</dbReference>
<dbReference type="GO" id="GO:0045944">
    <property type="term" value="P:positive regulation of transcription by RNA polymerase II"/>
    <property type="evidence" value="ECO:0000314"/>
    <property type="project" value="NTNU_SB"/>
</dbReference>
<dbReference type="GO" id="GO:0000209">
    <property type="term" value="P:protein polyubiquitination"/>
    <property type="evidence" value="ECO:0000315"/>
    <property type="project" value="MGI"/>
</dbReference>
<dbReference type="GO" id="GO:0019217">
    <property type="term" value="P:regulation of fatty acid metabolic process"/>
    <property type="evidence" value="ECO:0000315"/>
    <property type="project" value="MGI"/>
</dbReference>
<dbReference type="GO" id="GO:0010468">
    <property type="term" value="P:regulation of gene expression"/>
    <property type="evidence" value="ECO:0000315"/>
    <property type="project" value="MGI"/>
</dbReference>
<dbReference type="GO" id="GO:0010906">
    <property type="term" value="P:regulation of glucose metabolic process"/>
    <property type="evidence" value="ECO:0000315"/>
    <property type="project" value="MGI"/>
</dbReference>
<dbReference type="GO" id="GO:0050727">
    <property type="term" value="P:regulation of inflammatory response"/>
    <property type="evidence" value="ECO:0000315"/>
    <property type="project" value="MGI"/>
</dbReference>
<dbReference type="GO" id="GO:0019216">
    <property type="term" value="P:regulation of lipid metabolic process"/>
    <property type="evidence" value="ECO:0000315"/>
    <property type="project" value="MGI"/>
</dbReference>
<dbReference type="GO" id="GO:0007088">
    <property type="term" value="P:regulation of mitotic nuclear division"/>
    <property type="evidence" value="ECO:0000315"/>
    <property type="project" value="MGI"/>
</dbReference>
<dbReference type="GO" id="GO:1903353">
    <property type="term" value="P:regulation of nucleus organization"/>
    <property type="evidence" value="ECO:0000315"/>
    <property type="project" value="MGI"/>
</dbReference>
<dbReference type="GO" id="GO:0061136">
    <property type="term" value="P:regulation of proteasomal protein catabolic process"/>
    <property type="evidence" value="ECO:0000315"/>
    <property type="project" value="MGI"/>
</dbReference>
<dbReference type="GO" id="GO:1905897">
    <property type="term" value="P:regulation of response to endoplasmic reticulum stress"/>
    <property type="evidence" value="ECO:0000315"/>
    <property type="project" value="MGI"/>
</dbReference>
<dbReference type="GO" id="GO:0006357">
    <property type="term" value="P:regulation of transcription by RNA polymerase II"/>
    <property type="evidence" value="ECO:0000314"/>
    <property type="project" value="MGI"/>
</dbReference>
<dbReference type="GO" id="GO:0034976">
    <property type="term" value="P:response to endoplasmic reticulum stress"/>
    <property type="evidence" value="ECO:0000314"/>
    <property type="project" value="MGI"/>
</dbReference>
<dbReference type="GO" id="GO:0021522">
    <property type="term" value="P:spinal cord motor neuron differentiation"/>
    <property type="evidence" value="ECO:0000315"/>
    <property type="project" value="MGI"/>
</dbReference>
<dbReference type="CDD" id="cd14720">
    <property type="entry name" value="bZIP_NFE2-like"/>
    <property type="match status" value="1"/>
</dbReference>
<dbReference type="FunFam" id="1.10.880.10:FF:000001">
    <property type="entry name" value="Nuclear factor erythroid 2-related factor 2"/>
    <property type="match status" value="1"/>
</dbReference>
<dbReference type="Gene3D" id="1.10.880.10">
    <property type="entry name" value="Transcription factor, Skn-1-like, DNA-binding domain"/>
    <property type="match status" value="1"/>
</dbReference>
<dbReference type="InterPro" id="IPR004827">
    <property type="entry name" value="bZIP"/>
</dbReference>
<dbReference type="InterPro" id="IPR004826">
    <property type="entry name" value="bZIP_Maf"/>
</dbReference>
<dbReference type="InterPro" id="IPR047167">
    <property type="entry name" value="NFE2-like"/>
</dbReference>
<dbReference type="InterPro" id="IPR008917">
    <property type="entry name" value="TF_DNA-bd_sf"/>
</dbReference>
<dbReference type="PANTHER" id="PTHR24411:SF31">
    <property type="entry name" value="ENDOPLASMIC RETICULUM MEMBRANE SENSOR NFE2L1"/>
    <property type="match status" value="1"/>
</dbReference>
<dbReference type="PANTHER" id="PTHR24411">
    <property type="entry name" value="NUCLEAR FACTOR ERYTHROID 2-RELATED FACTOR"/>
    <property type="match status" value="1"/>
</dbReference>
<dbReference type="Pfam" id="PF03131">
    <property type="entry name" value="bZIP_Maf"/>
    <property type="match status" value="1"/>
</dbReference>
<dbReference type="SMART" id="SM00338">
    <property type="entry name" value="BRLZ"/>
    <property type="match status" value="1"/>
</dbReference>
<dbReference type="SUPFAM" id="SSF47454">
    <property type="entry name" value="A DNA-binding domain in eukaryotic transcription factors"/>
    <property type="match status" value="1"/>
</dbReference>
<dbReference type="PROSITE" id="PS50217">
    <property type="entry name" value="BZIP"/>
    <property type="match status" value="1"/>
</dbReference>
<dbReference type="PROSITE" id="PS00036">
    <property type="entry name" value="BZIP_BASIC"/>
    <property type="match status" value="1"/>
</dbReference>
<sequence>MLSLKKYLTEGLLQFTILLSLIGVRVDVDTYLTSQLPPLREIILGPSSAYTQTQFHNLRNTLDGYGIHPKSIDLDNYFTARRLLSQVRALDRFQVPTTEVNAWLVHRDPEGSVSGSQPNSGLALESSSGLQDVTGPDNGVRESETEQGFGEDLEDLGAVAPPVSGDLTKEDIDLIDILWRQDIDLGAGREVFDYSHRQKEQDVDKELQDGREREDTWSGEGAEALARDLLVDGETGESFPAQFPADVSSIPEAVPSESESPALQNSLLSPLLTGTESPFDLEQQWQDLMSIMEMQAMEVNTSASEILYNAPPGDPLSTNYSLAPNTPINQNVSLHQASLGGCSQDFSLFSPEVESLPVASSSTLLPLVPSNSTSLNSTFGSTNLAGLFFPSQLNGTANDTSGPELPDPLGGLLDEAMLDEISLMDLAIEEGFNPVQASQLEEEFDSDSGLSLDSSHSPSSLSSSEGSSSSSSSSSSSSASSSASSSFSEEGAVGYSSDSETLDLEEAEGAVGYQPEYSKFCRMSYQDPSQLSCLPYLEHVGHNHTYNMAPSALDSADLPPPSTLKKGSKEKQADFLDKQMSRDEHRARAMKIPFTNDKIINLPVEEFNELLSKYQLSEAQLSLIRDIRRRGKNKMAAQNCRKRKLDTILNLERDVEDLQRDKARLLREKVEFLRSLRQMKQKVQSLYQEVFGRLRDEHGRPYSPSQYALQYAGDGSVLLIPRTMADQQARRQERKPKDRRK</sequence>
<name>NF2L1_MOUSE</name>
<organism>
    <name type="scientific">Mus musculus</name>
    <name type="common">Mouse</name>
    <dbReference type="NCBI Taxonomy" id="10090"/>
    <lineage>
        <taxon>Eukaryota</taxon>
        <taxon>Metazoa</taxon>
        <taxon>Chordata</taxon>
        <taxon>Craniata</taxon>
        <taxon>Vertebrata</taxon>
        <taxon>Euteleostomi</taxon>
        <taxon>Mammalia</taxon>
        <taxon>Eutheria</taxon>
        <taxon>Euarchontoglires</taxon>
        <taxon>Glires</taxon>
        <taxon>Rodentia</taxon>
        <taxon>Myomorpha</taxon>
        <taxon>Muroidea</taxon>
        <taxon>Muridae</taxon>
        <taxon>Murinae</taxon>
        <taxon>Mus</taxon>
        <taxon>Mus</taxon>
    </lineage>
</organism>
<comment type="function">
    <molecule>Endoplasmic reticulum membrane sensor NFE2L1</molecule>
    <text evidence="15 17 23 26">Endoplasmic reticulum membrane sensor that translocates into the nucleus in response to various stresses to act as a transcription factor (PubMed:20385086, PubMed:21536885, PubMed:23816881, PubMed:29149604). Constitutes a precursor of the transcription factor NRF1. Able to detect various cellular stresses, such as cholesterol excess, oxidative stress or proteasome inhibition (PubMed:20385086, PubMed:21536885, PubMed:23816881, PubMed:29149604). In response to stress, it is released from the endoplasmic reticulum membrane following cleavage by the protease DDI2 and translocates into the nucleus to form the transcription factor NRF1 (PubMed:29149604). Acts as a key sensor of cholesterol excess: in excess cholesterol conditions, the endoplasmic reticulum membrane form of the protein directly binds cholesterol via its CRAC motif, preventing cleavage and release of the transcription factor NRF1, thereby allowing expression of genes promoting cholesterol removal, such as CD36 (PubMed:29149604). Involved in proteasome homeostasis: in response to proteasome inhibition, it is released from the endoplasmic reticulum membrane, translocates to the nucleus and activates expression of genes encoding proteasome subunits (PubMed:20385086, PubMed:21536885, PubMed:23816881).</text>
</comment>
<comment type="function">
    <molecule>Transcription factor NRF1</molecule>
    <text evidence="1 5 6 7 8 9 10 11 13 15 17 19 21 22 23 24 26 28">CNC-type bZIP family transcription factor that translocates to the nucleus and regulates expression of target genes in response to various stresses (PubMed:10601325, PubMed:11342101, PubMed:16872277, PubMed:21911472, PubMed:23144760, PubMed:23816881, PubMed:29149604). Heterodimerizes with small-Maf proteins (MAFF, MAFG or MAFK) and binds DNA motifs including the antioxidant response elements (AREs), which regulate expression of genes involved in oxidative stress response (PubMed:12808106, PubMed:15738389, PubMed:16872277, PubMed:21911472, PubMed:23144760, PubMed:23816881). Activates or represses expression of target genes, depending on the context (PubMed:12808106, PubMed:15738389, PubMed:16872277, PubMed:21911472, PubMed:23144760, PubMed:23816881). Plays a key role in cholesterol homeostasis by acting as a sensor of cholesterol excess: in low cholesterol conditions, translocates into the nucleus and represses expression of genes involved in defense against cholesterol excess, such as CD36 (PubMed:29149604). In excess cholesterol conditions, the endoplasmic reticulum membrane form of the protein directly binds cholesterol via its CRAC motif, preventing cleavage and release of the transcription factor NRF1, thereby allowing expression of genes promoting cholesterol removal (PubMed:29149604). Critical for redox balance in response to oxidative stress: acts by binding the AREs motifs on promoters and mediating activation of oxidative stress response genes, such as GCLC, GCLM, GSS, MT1 and MT2 (PubMed:10601325, PubMed:11342101, PubMed:12968018, PubMed:15738389, PubMed:18826952). Plays an essential role during fetal liver hematopoiesis: probably has a protective function against oxidative stress and is involved in lipid homeostasis in the liver (PubMed:12808106, PubMed:15738389, PubMed:18826952, PubMed:22586274, PubMed:9501099). Involved in proteasome homeostasis: in response to proteasome inhibition, mediates the 'bounce-back' of proteasome subunits by translocating into the nucleus and activating expression of genes encoding proteasome subunits (PubMed:20385086, PubMed:21536885, PubMed:23816881). Also involved in regulating glucose flux (PubMed:25041126). Together with CEBPB; represses expression of DSPP during odontoblast differentiation (By similarity). In response to ascorbic acid induction, activates expression of SP7/Osterix in osteoblasts (PubMed:17510056).</text>
</comment>
<comment type="function">
    <molecule>Isoform 2</molecule>
    <text evidence="22 29">Transcription factor that binds the antioxidant response elements (ARE) consensus sequence on promoters and activates their expression.</text>
</comment>
<comment type="function">
    <molecule>Isoform 3</molecule>
    <text evidence="29">Transcription factor that binds the extended kappa 3 site of the TNF-alpha promoter after Fc gamma RIII stimulation and participates in the induction of this cytokine (PubMed:9580677).</text>
</comment>
<comment type="subunit">
    <text evidence="1">Interacts with KEAP1.</text>
</comment>
<comment type="subunit">
    <molecule>Endoplasmic reticulum membrane sensor NFE2L1</molecule>
    <text evidence="1 19 20">Interacts (via CPD region) with FBXW7; leading to its ubiquitination and degradation (PubMed:21953459). Interacts with SYVN1/HRD1; leading to its ubiquitination and degradation (PubMed:21911472). Interacts (when ubiquitinated) with DDI2; leading to its cleavage (By similarity).</text>
</comment>
<comment type="subunit">
    <molecule>Transcription factor NRF1</molecule>
    <text evidence="1 6 14 19 22">Interacts (via the bZIP domain) with small MAF protein (MAFF, MAFG or MAFK); required for binding to antioxidant response elements (AREs) on DNA (PubMed:11342101, PubMed:18990090, PubMed:23144760). Interacts (via Destruction motif) with BTRC; leading to its ubiquitination and degradation (PubMed:21911472). Interacts with CEBPB; the heterodimer represses expression of DSPP during odontoblast differentiation (By similarity). Interacts with MOTS-c, a peptide produced by the mitochondrially encoded 12S rRNA MT-RNR1 (By similarity).</text>
</comment>
<comment type="interaction">
    <interactant intactId="EBI-30865042">
        <id>Q61985</id>
    </interactant>
    <interactant intactId="EBI-27122375">
        <id>A0A087WPF7</id>
        <label>Auts2</label>
    </interactant>
    <organismsDiffer>false</organismsDiffer>
    <experiments>3</experiments>
</comment>
<comment type="subcellular location">
    <molecule>Endoplasmic reticulum membrane sensor NFE2L1</molecule>
    <subcellularLocation>
        <location evidence="10 12 14 16 19 26">Endoplasmic reticulum membrane</location>
        <topology evidence="1">Single-pass type II membrane protein</topology>
    </subcellularLocation>
    <subcellularLocation>
        <location evidence="10 12 14 16 19 26">Endoplasmic reticulum membrane</location>
        <topology evidence="1">Single-pass type III membrane protein</topology>
    </subcellularLocation>
    <text evidence="1">In normal conditions, probably has a single-pass type II membrane protein topology, with the DNA-binding domain facing the endoplasmic reticulum lumen (By similarity). Following cellular stress, it is rapidly and efficiently retrotranslocated to the cytosolic side of the membrane, a process dependent on p97/VCP, to have a single-pass type III membrane protein topology with the major part of the protein facing the cytosol (By similarity). Retrotranslocated proteins are normally rapidly degraded by the proteasome and active species do not accumulate (By similarity). However, retrotranslocated protein NFE2L1 escapes degradation and is cleaved at Leu-104 by DDI2, releasing the protein from the endoplasmic reticulum membrane and forming the transcription factor NRF1 that translocates into the nucleus (By similarity).</text>
</comment>
<comment type="subcellular location">
    <molecule>Transcription factor NRF1</molecule>
    <subcellularLocation>
        <location evidence="3 19 22 26">Nucleus</location>
    </subcellularLocation>
    <text evidence="35">Translocates into the nucleus following cleavage of Endoplasmic reticulum membrane sensor NFE2L1 by aspartyl protease DDI2.</text>
</comment>
<comment type="subcellular location">
    <molecule>Isoform 2</molecule>
    <subcellularLocation>
        <location evidence="22">Cytoplasm</location>
    </subcellularLocation>
    <subcellularLocation>
        <location evidence="22">Nucleus</location>
    </subcellularLocation>
</comment>
<comment type="alternative products">
    <event type="alternative promoter"/>
    <event type="alternative splicing"/>
    <isoform>
        <id>Q61985-1</id>
        <name>1</name>
        <name evidence="33">Long</name>
        <name evidence="30">Nrf1a</name>
        <sequence type="displayed"/>
    </isoform>
    <isoform>
        <id>Q61985-3</id>
        <name>2</name>
        <name evidence="30">Nrf1b</name>
        <sequence type="described" ref="VSP_000580 VSP_046524"/>
    </isoform>
    <isoform>
        <id>Q61985-2</id>
        <name>3</name>
        <name evidence="33">Short</name>
        <sequence type="described" ref="VSP_000580 VSP_046523 VSP_000581"/>
    </isoform>
</comment>
<comment type="tissue specificity">
    <text evidence="22">Isoform 1: Widely expressed including kidney, brown fat, white fat, large intestine, small intestine, stomach, lung, brain and liver (PubMed:23144760). Isoform 1: Expressed in mouse embryonic fibroblasts (MEF) (PubMed:23144760). Isoform 2: Widely expressed including kidney, brown fat, white fat, large intestine, small intestine, stomach, lung, brain and liver (PubMed:23144760). Isoform 2: levels in white fat, lung and liver are increased compared to isoform 1 (at protein level) (PubMed:23144760). Isoform 2: levels are elevated in brown fat and brain, but are reduced in liver compared to isoform 1 levels (PubMed:23144760). Isoform 2: Expressed in mouse embryonic fibroblasts (MEF) (PubMed:23144760).</text>
</comment>
<comment type="domain">
    <text evidence="26">The cholesterol recognition/amino acid consensus (CRAC) region directly binds cholesterol, as well as campesterol and 27-hydroxycholesterol (PubMed:29149604). Has much lower affinity for epicholesterol (PubMed:29149604).</text>
</comment>
<comment type="PTM">
    <molecule>Endoplasmic reticulum membrane sensor NFE2L1</molecule>
    <text evidence="1">Cleaved at Leu-104 by the aspartyl protease DDI2 following retrotranslocation, releasing the protein from the endoplasmic reticulum membrane and forming the transcription factor NRF1 that translocates into the nucleus. Ubiquitination is prerequisite for cleavage by aspartyl protease DDI2.</text>
</comment>
<comment type="PTM">
    <molecule>Endoplasmic reticulum membrane sensor NFE2L1</molecule>
    <text evidence="1 12 14">N-glycosylated in normal conditions, when it has a single-pass type II membrane protein topology, with the DNA-binding domain facing the endoplasmic reticulum lumen (PubMed:17705787, PubMed:18990090). Deglycosylated during retrotranslocation to the cytosolic side of the membrane, to have a single-pass type III membrane protein topology with the major part of the protein facing the cytosol (By similarity).</text>
</comment>
<comment type="PTM">
    <molecule>Endoplasmic reticulum membrane sensor NFE2L1</molecule>
    <text evidence="1 19 20">Ubiquitinated by the SCF(FBXW7) complex and SYVN1/HRD1, leading to its degradation by the proteasome (PubMed:21911472, PubMed:21953459). Ubiquitinated during retrotranslocation to the cytosolic side of the membrane: ubiquitination does not lead to degradation and is required for processing by the aspartyl protease DDI2 and subsequent release from the endoplasmic reticulum membrane (By similarity).</text>
</comment>
<comment type="PTM">
    <molecule>Transcription factor NRF1</molecule>
    <text evidence="1 23 29">Phosphorylation by CK2 at Ser-497 inhibits transcription factor activity, possibly by affecting DNA-binding activity (PubMed:23816881, PubMed:9580677). Phosphorylation at Ser-568 is required for interaction with CEBPB (By similarity).</text>
</comment>
<comment type="PTM">
    <molecule>Transcription factor NRF1</molecule>
    <text evidence="19">Ubiquitinated by the SCF(BTRC) complex in the nucleus, leading to its degradation by the proteasome.</text>
</comment>
<comment type="disruption phenotype">
    <text evidence="8 9 13 17 18 26 27 28">Embryonic lethality: embryos progress normally to the late egg cylinder stage at approximately 6.5 days post coitus (dpc), but development is arrested before 7.5 dpc (PubMed:9087432, PubMed:9501099). Mutant embryos fail to form a primitive streak and lack detectable mesoderm (PubMed:9087432). Homozygous embryos suffer from anemia as a result of abnormal fetal liver erythropoiesis (PubMed:9501099). No defect in globin gene expression are detected; abnormal red cell production being the result of a defect in the fetal liver microenvironment specific for erythroid cells (PubMed:9501099). Mice lacking both Nfe2l1 and Nfe2l2 die early between embryonic days 9 and 10 and exhibit extensive apoptosis due to marked oxidative stress in cells that is indicated by elevated intracellular reactive oxygen species levels and cell death (PubMed:12968018). Conditional knockout mice lacking Nfe2l1 in the liver do not show any liver damage when they are maintained in an unstressed condition (PubMed:15738389). In oxidative stress condition, they develop hepatic cancer following steatosis, apoptosis, necrosis, inflammation, and fibrosis (PubMed:15738389). Hepatocyte-specific deletion causes liver damage resembling the human disease non-alcoholic steatohepatitis (PubMed:18826952). Liver of conditional knockout mice lacking Nfe2l1 show massive hepatic cholesterol accumulation and damage due to inability to mediate response to cholesterol excess (PubMed:29149604). Conditional knockout mice lacking Nfe2l1 in the brain show proteasome impairment and progressive degeneration in cortical neurons (PubMed:21536885, PubMed:21554501).</text>
</comment>
<comment type="miscellaneous">
    <molecule>Isoform 1</molecule>
    <text>Produced by alternative promoter usage.</text>
</comment>
<comment type="miscellaneous">
    <molecule>Isoform 2</molecule>
    <text evidence="34">Produced by alternative promoter usage.</text>
</comment>
<comment type="miscellaneous">
    <molecule>Isoform 3</molecule>
    <text evidence="34">Produced by alternative splicing of isoform 1.</text>
</comment>
<comment type="similarity">
    <text evidence="34">Belongs to the bZIP family. CNC subfamily.</text>
</comment>
<comment type="caution">
    <molecule>Endoplasmic reticulum membrane sensor NFE2L1</molecule>
    <text evidence="16 25">Its topology is subject to discussion. According to some groups, it has a single-pass type II membrane protein in normal conditions and is retrotranslocated into a single-pass type III membrane protein in response to stress. According to other reports, it is integrated into the endoplasmic reticulum membrane via multiple membrane-spanning alpha-helices (PubMed:20629635, PubMed:26268886).</text>
</comment>
<comment type="caution">
    <molecule>Endoplasmic reticulum membrane sensor NFE2L1</molecule>
    <text evidence="29">Was initially thought to be either inactive as transcription factor or to repress transcriptional activation mediated by other isoforms (PubMed:9580677). The presence of the transmembrane region at the N-terminus may explain the inability to observe transcription factor activity.</text>
</comment>
<proteinExistence type="evidence at protein level"/>